<proteinExistence type="inferred from homology"/>
<keyword id="KW-0067">ATP-binding</keyword>
<keyword id="KW-0997">Cell inner membrane</keyword>
<keyword id="KW-1003">Cell membrane</keyword>
<keyword id="KW-0472">Membrane</keyword>
<keyword id="KW-0547">Nucleotide-binding</keyword>
<keyword id="KW-0592">Phosphate transport</keyword>
<keyword id="KW-1278">Translocase</keyword>
<keyword id="KW-0813">Transport</keyword>
<gene>
    <name evidence="1" type="primary">pstB</name>
    <name type="ordered locus">ACIAD1215</name>
</gene>
<comment type="function">
    <text evidence="1">Part of the ABC transporter complex PstSACB involved in phosphate import. Responsible for energy coupling to the transport system.</text>
</comment>
<comment type="catalytic activity">
    <reaction evidence="1">
        <text>phosphate(out) + ATP + H2O = ADP + 2 phosphate(in) + H(+)</text>
        <dbReference type="Rhea" id="RHEA:24440"/>
        <dbReference type="ChEBI" id="CHEBI:15377"/>
        <dbReference type="ChEBI" id="CHEBI:15378"/>
        <dbReference type="ChEBI" id="CHEBI:30616"/>
        <dbReference type="ChEBI" id="CHEBI:43474"/>
        <dbReference type="ChEBI" id="CHEBI:456216"/>
        <dbReference type="EC" id="7.3.2.1"/>
    </reaction>
</comment>
<comment type="subunit">
    <text evidence="1">The complex is composed of two ATP-binding proteins (PstB), two transmembrane proteins (PstC and PstA) and a solute-binding protein (PstS).</text>
</comment>
<comment type="subcellular location">
    <subcellularLocation>
        <location evidence="1">Cell inner membrane</location>
        <topology evidence="1">Peripheral membrane protein</topology>
    </subcellularLocation>
</comment>
<comment type="similarity">
    <text evidence="1">Belongs to the ABC transporter superfamily. Phosphate importer (TC 3.A.1.7) family.</text>
</comment>
<reference key="1">
    <citation type="journal article" date="2004" name="Nucleic Acids Res.">
        <title>Unique features revealed by the genome sequence of Acinetobacter sp. ADP1, a versatile and naturally transformation competent bacterium.</title>
        <authorList>
            <person name="Barbe V."/>
            <person name="Vallenet D."/>
            <person name="Fonknechten N."/>
            <person name="Kreimeyer A."/>
            <person name="Oztas S."/>
            <person name="Labarre L."/>
            <person name="Cruveiller S."/>
            <person name="Robert C."/>
            <person name="Duprat S."/>
            <person name="Wincker P."/>
            <person name="Ornston L.N."/>
            <person name="Weissenbach J."/>
            <person name="Marliere P."/>
            <person name="Cohen G.N."/>
            <person name="Medigue C."/>
        </authorList>
    </citation>
    <scope>NUCLEOTIDE SEQUENCE [LARGE SCALE GENOMIC DNA]</scope>
    <source>
        <strain>ATCC 33305 / BD413 / ADP1</strain>
    </source>
</reference>
<evidence type="ECO:0000255" key="1">
    <source>
        <dbReference type="HAMAP-Rule" id="MF_01702"/>
    </source>
</evidence>
<name>PSTB_ACIAD</name>
<sequence length="303" mass="33643">MMNTINTTNSLEKDNTVTSEQLQFTGAETQSKRQGSFVSFDTQTAPKKDVKNTIKLSTSDVHVYYGESEAIKGIDLEIYENEVIAFIGPSGCGKSTFLRTLNRMNDTIDSCRVTGKVLLDNQDIYDPNLDVVLLRAQVGMVFQKPNPFPKSIFENVAYGPKLHGLARDKYDLEEIVENSLHKAGLWDEVKDRLNQPGTGLSGGQQQRLCIARTIAVSPEVILMDEPCSALDPIATAKVEELISELSTQYTIAIVTHSMQQAARVSDRTAYFHLGDLIEVNSTEKVFTQPDHQLTEAYITGRFG</sequence>
<accession>Q6FCW7</accession>
<protein>
    <recommendedName>
        <fullName evidence="1">Phosphate import ATP-binding protein PstB</fullName>
        <ecNumber evidence="1">7.3.2.1</ecNumber>
    </recommendedName>
    <alternativeName>
        <fullName evidence="1">ABC phosphate transporter</fullName>
    </alternativeName>
    <alternativeName>
        <fullName evidence="1">Phosphate-transporting ATPase</fullName>
    </alternativeName>
</protein>
<feature type="chain" id="PRO_0000092764" description="Phosphate import ATP-binding protein PstB">
    <location>
        <begin position="1"/>
        <end position="303"/>
    </location>
</feature>
<feature type="domain" description="ABC transporter" evidence="1">
    <location>
        <begin position="56"/>
        <end position="298"/>
    </location>
</feature>
<feature type="binding site" evidence="1">
    <location>
        <begin position="88"/>
        <end position="95"/>
    </location>
    <ligand>
        <name>ATP</name>
        <dbReference type="ChEBI" id="CHEBI:30616"/>
    </ligand>
</feature>
<organism>
    <name type="scientific">Acinetobacter baylyi (strain ATCC 33305 / BD413 / ADP1)</name>
    <dbReference type="NCBI Taxonomy" id="62977"/>
    <lineage>
        <taxon>Bacteria</taxon>
        <taxon>Pseudomonadati</taxon>
        <taxon>Pseudomonadota</taxon>
        <taxon>Gammaproteobacteria</taxon>
        <taxon>Moraxellales</taxon>
        <taxon>Moraxellaceae</taxon>
        <taxon>Acinetobacter</taxon>
    </lineage>
</organism>
<dbReference type="EC" id="7.3.2.1" evidence="1"/>
<dbReference type="EMBL" id="CR543861">
    <property type="protein sequence ID" value="CAG68092.1"/>
    <property type="molecule type" value="Genomic_DNA"/>
</dbReference>
<dbReference type="SMR" id="Q6FCW7"/>
<dbReference type="STRING" id="202950.GCA_001485005_00985"/>
<dbReference type="KEGG" id="aci:ACIAD1215"/>
<dbReference type="eggNOG" id="COG1117">
    <property type="taxonomic scope" value="Bacteria"/>
</dbReference>
<dbReference type="HOGENOM" id="CLU_000604_1_22_6"/>
<dbReference type="Proteomes" id="UP000000430">
    <property type="component" value="Chromosome"/>
</dbReference>
<dbReference type="GO" id="GO:0005886">
    <property type="term" value="C:plasma membrane"/>
    <property type="evidence" value="ECO:0007669"/>
    <property type="project" value="UniProtKB-SubCell"/>
</dbReference>
<dbReference type="GO" id="GO:0005524">
    <property type="term" value="F:ATP binding"/>
    <property type="evidence" value="ECO:0007669"/>
    <property type="project" value="UniProtKB-KW"/>
</dbReference>
<dbReference type="GO" id="GO:0016887">
    <property type="term" value="F:ATP hydrolysis activity"/>
    <property type="evidence" value="ECO:0007669"/>
    <property type="project" value="InterPro"/>
</dbReference>
<dbReference type="GO" id="GO:0015415">
    <property type="term" value="F:ATPase-coupled phosphate ion transmembrane transporter activity"/>
    <property type="evidence" value="ECO:0007669"/>
    <property type="project" value="UniProtKB-EC"/>
</dbReference>
<dbReference type="GO" id="GO:0035435">
    <property type="term" value="P:phosphate ion transmembrane transport"/>
    <property type="evidence" value="ECO:0007669"/>
    <property type="project" value="InterPro"/>
</dbReference>
<dbReference type="CDD" id="cd03260">
    <property type="entry name" value="ABC_PstB_phosphate_transporter"/>
    <property type="match status" value="1"/>
</dbReference>
<dbReference type="Gene3D" id="3.40.50.300">
    <property type="entry name" value="P-loop containing nucleotide triphosphate hydrolases"/>
    <property type="match status" value="1"/>
</dbReference>
<dbReference type="InterPro" id="IPR003593">
    <property type="entry name" value="AAA+_ATPase"/>
</dbReference>
<dbReference type="InterPro" id="IPR003439">
    <property type="entry name" value="ABC_transporter-like_ATP-bd"/>
</dbReference>
<dbReference type="InterPro" id="IPR017871">
    <property type="entry name" value="ABC_transporter-like_CS"/>
</dbReference>
<dbReference type="InterPro" id="IPR027417">
    <property type="entry name" value="P-loop_NTPase"/>
</dbReference>
<dbReference type="InterPro" id="IPR005670">
    <property type="entry name" value="PstB-like"/>
</dbReference>
<dbReference type="NCBIfam" id="TIGR00972">
    <property type="entry name" value="3a0107s01c2"/>
    <property type="match status" value="1"/>
</dbReference>
<dbReference type="PANTHER" id="PTHR43423">
    <property type="entry name" value="ABC TRANSPORTER I FAMILY MEMBER 17"/>
    <property type="match status" value="1"/>
</dbReference>
<dbReference type="PANTHER" id="PTHR43423:SF1">
    <property type="entry name" value="ABC TRANSPORTER I FAMILY MEMBER 17"/>
    <property type="match status" value="1"/>
</dbReference>
<dbReference type="Pfam" id="PF00005">
    <property type="entry name" value="ABC_tran"/>
    <property type="match status" value="1"/>
</dbReference>
<dbReference type="SMART" id="SM00382">
    <property type="entry name" value="AAA"/>
    <property type="match status" value="1"/>
</dbReference>
<dbReference type="SUPFAM" id="SSF52540">
    <property type="entry name" value="P-loop containing nucleoside triphosphate hydrolases"/>
    <property type="match status" value="1"/>
</dbReference>
<dbReference type="PROSITE" id="PS00211">
    <property type="entry name" value="ABC_TRANSPORTER_1"/>
    <property type="match status" value="1"/>
</dbReference>
<dbReference type="PROSITE" id="PS50893">
    <property type="entry name" value="ABC_TRANSPORTER_2"/>
    <property type="match status" value="1"/>
</dbReference>
<dbReference type="PROSITE" id="PS51238">
    <property type="entry name" value="PSTB"/>
    <property type="match status" value="1"/>
</dbReference>